<comment type="subcellular location">
    <subcellularLocation>
        <location evidence="3">Secreted</location>
    </subcellularLocation>
</comment>
<comment type="tissue specificity">
    <text evidence="2">Expressed in roots, leaves, stems, flowers and siliques.</text>
</comment>
<comment type="induction">
    <text>Not induced by inorganic phosphate deprivation.</text>
</comment>
<comment type="similarity">
    <text evidence="3">Belongs to the bacterial phospholipase C family.</text>
</comment>
<comment type="sequence caution" evidence="3">
    <conflict type="erroneous initiation">
        <sequence resource="EMBL-CDS" id="CAB62350"/>
    </conflict>
    <text>Truncated N-terminus.</text>
</comment>
<organism>
    <name type="scientific">Arabidopsis thaliana</name>
    <name type="common">Mouse-ear cress</name>
    <dbReference type="NCBI Taxonomy" id="3702"/>
    <lineage>
        <taxon>Eukaryota</taxon>
        <taxon>Viridiplantae</taxon>
        <taxon>Streptophyta</taxon>
        <taxon>Embryophyta</taxon>
        <taxon>Tracheophyta</taxon>
        <taxon>Spermatophyta</taxon>
        <taxon>Magnoliopsida</taxon>
        <taxon>eudicotyledons</taxon>
        <taxon>Gunneridae</taxon>
        <taxon>Pentapetalae</taxon>
        <taxon>rosids</taxon>
        <taxon>malvids</taxon>
        <taxon>Brassicales</taxon>
        <taxon>Brassicaceae</taxon>
        <taxon>Camelineae</taxon>
        <taxon>Arabidopsis</taxon>
    </lineage>
</organism>
<reference key="1">
    <citation type="journal article" date="2005" name="J. Biol. Chem.">
        <title>A novel phosphatidylcholine-hydrolyzing phospholipase C induced by phosphate starvation in Arabidopsis.</title>
        <authorList>
            <person name="Nakamura Y."/>
            <person name="Awai K."/>
            <person name="Masuda T."/>
            <person name="Yoshioka Y."/>
            <person name="Takamiya K."/>
            <person name="Ohta H."/>
        </authorList>
    </citation>
    <scope>NUCLEOTIDE SEQUENCE [MRNA]</scope>
    <scope>LACK OF INDUCTION BY PHOSPHATE DEPRIVATION</scope>
</reference>
<reference key="2">
    <citation type="journal article" date="2000" name="Nature">
        <title>Sequence and analysis of chromosome 3 of the plant Arabidopsis thaliana.</title>
        <authorList>
            <person name="Salanoubat M."/>
            <person name="Lemcke K."/>
            <person name="Rieger M."/>
            <person name="Ansorge W."/>
            <person name="Unseld M."/>
            <person name="Fartmann B."/>
            <person name="Valle G."/>
            <person name="Bloecker H."/>
            <person name="Perez-Alonso M."/>
            <person name="Obermaier B."/>
            <person name="Delseny M."/>
            <person name="Boutry M."/>
            <person name="Grivell L.A."/>
            <person name="Mache R."/>
            <person name="Puigdomenech P."/>
            <person name="De Simone V."/>
            <person name="Choisne N."/>
            <person name="Artiguenave F."/>
            <person name="Robert C."/>
            <person name="Brottier P."/>
            <person name="Wincker P."/>
            <person name="Cattolico L."/>
            <person name="Weissenbach J."/>
            <person name="Saurin W."/>
            <person name="Quetier F."/>
            <person name="Schaefer M."/>
            <person name="Mueller-Auer S."/>
            <person name="Gabel C."/>
            <person name="Fuchs M."/>
            <person name="Benes V."/>
            <person name="Wurmbach E."/>
            <person name="Drzonek H."/>
            <person name="Erfle H."/>
            <person name="Jordan N."/>
            <person name="Bangert S."/>
            <person name="Wiedelmann R."/>
            <person name="Kranz H."/>
            <person name="Voss H."/>
            <person name="Holland R."/>
            <person name="Brandt P."/>
            <person name="Nyakatura G."/>
            <person name="Vezzi A."/>
            <person name="D'Angelo M."/>
            <person name="Pallavicini A."/>
            <person name="Toppo S."/>
            <person name="Simionati B."/>
            <person name="Conrad A."/>
            <person name="Hornischer K."/>
            <person name="Kauer G."/>
            <person name="Loehnert T.-H."/>
            <person name="Nordsiek G."/>
            <person name="Reichelt J."/>
            <person name="Scharfe M."/>
            <person name="Schoen O."/>
            <person name="Bargues M."/>
            <person name="Terol J."/>
            <person name="Climent J."/>
            <person name="Navarro P."/>
            <person name="Collado C."/>
            <person name="Perez-Perez A."/>
            <person name="Ottenwaelder B."/>
            <person name="Duchemin D."/>
            <person name="Cooke R."/>
            <person name="Laudie M."/>
            <person name="Berger-Llauro C."/>
            <person name="Purnelle B."/>
            <person name="Masuy D."/>
            <person name="de Haan M."/>
            <person name="Maarse A.C."/>
            <person name="Alcaraz J.-P."/>
            <person name="Cottet A."/>
            <person name="Casacuberta E."/>
            <person name="Monfort A."/>
            <person name="Argiriou A."/>
            <person name="Flores M."/>
            <person name="Liguori R."/>
            <person name="Vitale D."/>
            <person name="Mannhaupt G."/>
            <person name="Haase D."/>
            <person name="Schoof H."/>
            <person name="Rudd S."/>
            <person name="Zaccaria P."/>
            <person name="Mewes H.-W."/>
            <person name="Mayer K.F.X."/>
            <person name="Kaul S."/>
            <person name="Town C.D."/>
            <person name="Koo H.L."/>
            <person name="Tallon L.J."/>
            <person name="Jenkins J."/>
            <person name="Rooney T."/>
            <person name="Rizzo M."/>
            <person name="Walts A."/>
            <person name="Utterback T."/>
            <person name="Fujii C.Y."/>
            <person name="Shea T.P."/>
            <person name="Creasy T.H."/>
            <person name="Haas B."/>
            <person name="Maiti R."/>
            <person name="Wu D."/>
            <person name="Peterson J."/>
            <person name="Van Aken S."/>
            <person name="Pai G."/>
            <person name="Militscher J."/>
            <person name="Sellers P."/>
            <person name="Gill J.E."/>
            <person name="Feldblyum T.V."/>
            <person name="Preuss D."/>
            <person name="Lin X."/>
            <person name="Nierman W.C."/>
            <person name="Salzberg S.L."/>
            <person name="White O."/>
            <person name="Venter J.C."/>
            <person name="Fraser C.M."/>
            <person name="Kaneko T."/>
            <person name="Nakamura Y."/>
            <person name="Sato S."/>
            <person name="Kato T."/>
            <person name="Asamizu E."/>
            <person name="Sasamoto S."/>
            <person name="Kimura T."/>
            <person name="Idesawa K."/>
            <person name="Kawashima K."/>
            <person name="Kishida Y."/>
            <person name="Kiyokawa C."/>
            <person name="Kohara M."/>
            <person name="Matsumoto M."/>
            <person name="Matsuno A."/>
            <person name="Muraki A."/>
            <person name="Nakayama S."/>
            <person name="Nakazaki N."/>
            <person name="Shinpo S."/>
            <person name="Takeuchi C."/>
            <person name="Wada T."/>
            <person name="Watanabe A."/>
            <person name="Yamada M."/>
            <person name="Yasuda M."/>
            <person name="Tabata S."/>
        </authorList>
    </citation>
    <scope>NUCLEOTIDE SEQUENCE [LARGE SCALE GENOMIC DNA]</scope>
    <source>
        <strain>cv. Columbia</strain>
    </source>
</reference>
<reference key="3">
    <citation type="journal article" date="2017" name="Plant J.">
        <title>Araport11: a complete reannotation of the Arabidopsis thaliana reference genome.</title>
        <authorList>
            <person name="Cheng C.Y."/>
            <person name="Krishnakumar V."/>
            <person name="Chan A.P."/>
            <person name="Thibaud-Nissen F."/>
            <person name="Schobel S."/>
            <person name="Town C.D."/>
        </authorList>
    </citation>
    <scope>GENOME REANNOTATION</scope>
    <source>
        <strain>cv. Columbia</strain>
    </source>
</reference>
<reference key="4">
    <citation type="journal article" date="2010" name="Mol. Plant">
        <title>Plant phosphatidylcholine-hydrolyzing phospholipases C NPC3 and NPC4 with roles in root development and brassinolide signaling in Arabidopsis thaliana.</title>
        <authorList>
            <person name="Wimalasekera R."/>
            <person name="Pejchar P."/>
            <person name="Holk A."/>
            <person name="Martinec J."/>
            <person name="Scherer G.F."/>
        </authorList>
    </citation>
    <scope>TISSUE SPECIFICITY</scope>
</reference>
<evidence type="ECO:0000255" key="1"/>
<evidence type="ECO:0000269" key="2">
    <source>
    </source>
</evidence>
<evidence type="ECO:0000305" key="3"/>
<keyword id="KW-0378">Hydrolase</keyword>
<keyword id="KW-1185">Reference proteome</keyword>
<keyword id="KW-0964">Secreted</keyword>
<keyword id="KW-0732">Signal</keyword>
<proteinExistence type="evidence at transcript level"/>
<gene>
    <name type="primary">NPC6</name>
    <name type="ordered locus">At3g48610</name>
</gene>
<dbReference type="EC" id="3.1.-.-"/>
<dbReference type="EMBL" id="AB084296">
    <property type="protein sequence ID" value="BAC22511.1"/>
    <property type="molecule type" value="mRNA"/>
</dbReference>
<dbReference type="EMBL" id="AL133315">
    <property type="protein sequence ID" value="CAB62350.1"/>
    <property type="status" value="ALT_INIT"/>
    <property type="molecule type" value="Genomic_DNA"/>
</dbReference>
<dbReference type="EMBL" id="CP002686">
    <property type="protein sequence ID" value="AEE78437.1"/>
    <property type="molecule type" value="Genomic_DNA"/>
</dbReference>
<dbReference type="PIR" id="T46205">
    <property type="entry name" value="T46205"/>
</dbReference>
<dbReference type="RefSeq" id="NP_190430.2">
    <property type="nucleotide sequence ID" value="NM_114720.4"/>
</dbReference>
<dbReference type="SMR" id="Q8H965"/>
<dbReference type="FunCoup" id="Q8H965">
    <property type="interactions" value="79"/>
</dbReference>
<dbReference type="STRING" id="3702.Q8H965"/>
<dbReference type="GlyGen" id="Q8H965">
    <property type="glycosylation" value="2 sites"/>
</dbReference>
<dbReference type="PaxDb" id="3702-AT3G48610.1"/>
<dbReference type="ProteomicsDB" id="250541"/>
<dbReference type="EnsemblPlants" id="AT3G48610.1">
    <property type="protein sequence ID" value="AT3G48610.1"/>
    <property type="gene ID" value="AT3G48610"/>
</dbReference>
<dbReference type="GeneID" id="824021"/>
<dbReference type="Gramene" id="AT3G48610.1">
    <property type="protein sequence ID" value="AT3G48610.1"/>
    <property type="gene ID" value="AT3G48610"/>
</dbReference>
<dbReference type="KEGG" id="ath:AT3G48610"/>
<dbReference type="Araport" id="AT3G48610"/>
<dbReference type="TAIR" id="AT3G48610">
    <property type="gene designation" value="NPC6"/>
</dbReference>
<dbReference type="eggNOG" id="ENOG502QPJ0">
    <property type="taxonomic scope" value="Eukaryota"/>
</dbReference>
<dbReference type="HOGENOM" id="CLU_029943_1_0_1"/>
<dbReference type="InParanoid" id="Q8H965"/>
<dbReference type="OMA" id="WHSCVPG"/>
<dbReference type="OrthoDB" id="5135119at2759"/>
<dbReference type="PhylomeDB" id="Q8H965"/>
<dbReference type="BRENDA" id="3.1.4.3">
    <property type="organism ID" value="399"/>
</dbReference>
<dbReference type="PRO" id="PR:Q8H965"/>
<dbReference type="Proteomes" id="UP000006548">
    <property type="component" value="Chromosome 3"/>
</dbReference>
<dbReference type="ExpressionAtlas" id="Q8H965">
    <property type="expression patterns" value="baseline and differential"/>
</dbReference>
<dbReference type="GO" id="GO:0009507">
    <property type="term" value="C:chloroplast"/>
    <property type="evidence" value="ECO:0000314"/>
    <property type="project" value="TAIR"/>
</dbReference>
<dbReference type="GO" id="GO:0005576">
    <property type="term" value="C:extracellular region"/>
    <property type="evidence" value="ECO:0007669"/>
    <property type="project" value="UniProtKB-SubCell"/>
</dbReference>
<dbReference type="GO" id="GO:0004629">
    <property type="term" value="F:phospholipase C activity"/>
    <property type="evidence" value="ECO:0000314"/>
    <property type="project" value="TAIR"/>
</dbReference>
<dbReference type="GO" id="GO:0048229">
    <property type="term" value="P:gametophyte development"/>
    <property type="evidence" value="ECO:0000316"/>
    <property type="project" value="TAIR"/>
</dbReference>
<dbReference type="GO" id="GO:0009395">
    <property type="term" value="P:phospholipid catabolic process"/>
    <property type="evidence" value="ECO:0000314"/>
    <property type="project" value="TAIR"/>
</dbReference>
<dbReference type="GO" id="GO:0048364">
    <property type="term" value="P:root development"/>
    <property type="evidence" value="ECO:0000316"/>
    <property type="project" value="TAIR"/>
</dbReference>
<dbReference type="FunFam" id="3.40.720.10:FF:000011">
    <property type="entry name" value="Non-specific phospholipase C1"/>
    <property type="match status" value="1"/>
</dbReference>
<dbReference type="FunFam" id="3.40.720.10:FF:000054">
    <property type="entry name" value="non-specific phospholipase C6"/>
    <property type="match status" value="1"/>
</dbReference>
<dbReference type="Gene3D" id="3.40.720.10">
    <property type="entry name" value="Alkaline Phosphatase, subunit A"/>
    <property type="match status" value="2"/>
</dbReference>
<dbReference type="InterPro" id="IPR017850">
    <property type="entry name" value="Alkaline_phosphatase_core_sf"/>
</dbReference>
<dbReference type="InterPro" id="IPR007312">
    <property type="entry name" value="Phosphoesterase"/>
</dbReference>
<dbReference type="PANTHER" id="PTHR31956">
    <property type="entry name" value="NON-SPECIFIC PHOSPHOLIPASE C4-RELATED"/>
    <property type="match status" value="1"/>
</dbReference>
<dbReference type="PANTHER" id="PTHR31956:SF2">
    <property type="entry name" value="NON-SPECIFIC PHOSPHOLIPASE C6"/>
    <property type="match status" value="1"/>
</dbReference>
<dbReference type="Pfam" id="PF04185">
    <property type="entry name" value="Phosphoesterase"/>
    <property type="match status" value="1"/>
</dbReference>
<dbReference type="SUPFAM" id="SSF53649">
    <property type="entry name" value="Alkaline phosphatase-like"/>
    <property type="match status" value="1"/>
</dbReference>
<name>NPC6_ARATH</name>
<accession>Q8H965</accession>
<accession>Q9SMN8</accession>
<sequence>MKPSSASRFSLTFSHFLTLYCLLTQTHVAQGSHQWQSPIKTVVVLVLENRSFDHLLGWMKNSVNPTINGVTGQECNPVPNSTQTICFTSDAEFVDPDPGHSFEAVEQQVFGSGPGQIPSMMGFVEQALSMPGNLSETVMKGFRPEAVPVYAELVKEFAVFDRWFSSIPGPTQPNRLFVYSATSHGSTSHVKKQLAQGYPQKTIFDSLHSNDIDFGIYFQNIPTTLFYRNLRQLKYIFNLHQYDLKFKKDAAKGKLPSLTVIEPRYFDLKGLPANDDHPSHDVANGQKLVKEVYEALRSSPQWNETLLVITYDEHGGFYDHVKTPYVGIPNPDGNTGPAPGFFKFDRLGVRVPTIMVSPWIQKGTVVSEAKGPTESSEYEHSSIPATIKKLFNLSSNFLTHRDAWAATFEDVVSHLTTPRTDCPMTLPEVAPMRATEPKEDAALSEFQGEVVQLAAVLNGDHFLSSFPEEIGKKMTVKQAHEYVKGATSRFIRASKEAMKLGADKSAIVDMRSSLTTRPHN</sequence>
<feature type="signal peptide" evidence="1">
    <location>
        <begin position="1"/>
        <end position="31"/>
    </location>
</feature>
<feature type="chain" id="PRO_0000424788" description="Non-specific phospholipase C6">
    <location>
        <begin position="32"/>
        <end position="520"/>
    </location>
</feature>
<protein>
    <recommendedName>
        <fullName>Non-specific phospholipase C6</fullName>
        <ecNumber>3.1.-.-</ecNumber>
    </recommendedName>
</protein>